<dbReference type="EMBL" id="AB032418">
    <property type="protein sequence ID" value="BAA92776.1"/>
    <property type="molecule type" value="Genomic_DNA"/>
</dbReference>
<dbReference type="EMBL" id="AC158398">
    <property type="status" value="NOT_ANNOTATED_CDS"/>
    <property type="molecule type" value="Genomic_DNA"/>
</dbReference>
<dbReference type="CCDS" id="CCDS25919.1"/>
<dbReference type="RefSeq" id="NP_064683.2">
    <property type="nucleotide sequence ID" value="NM_020287.3"/>
</dbReference>
<dbReference type="FunCoup" id="Q9JMC2">
    <property type="interactions" value="429"/>
</dbReference>
<dbReference type="STRING" id="10090.ENSMUSP00000061046"/>
<dbReference type="GlyGen" id="Q9JMC2">
    <property type="glycosylation" value="2 sites"/>
</dbReference>
<dbReference type="PhosphoSitePlus" id="Q9JMC2"/>
<dbReference type="PaxDb" id="10090-ENSMUSP00000061046"/>
<dbReference type="ProteomicsDB" id="269321"/>
<dbReference type="Antibodypedia" id="23212">
    <property type="antibodies" value="81 antibodies from 22 providers"/>
</dbReference>
<dbReference type="DNASU" id="56856"/>
<dbReference type="Ensembl" id="ENSMUST00000051857.5">
    <property type="protein sequence ID" value="ENSMUSP00000061046.4"/>
    <property type="gene ID" value="ENSMUSG00000045440.5"/>
</dbReference>
<dbReference type="GeneID" id="56856"/>
<dbReference type="KEGG" id="mmu:56856"/>
<dbReference type="UCSC" id="uc007not.1">
    <property type="organism name" value="mouse"/>
</dbReference>
<dbReference type="AGR" id="MGI:1930787"/>
<dbReference type="CTD" id="84684"/>
<dbReference type="MGI" id="MGI:1930787">
    <property type="gene designation" value="Insm2"/>
</dbReference>
<dbReference type="VEuPathDB" id="HostDB:ENSMUSG00000045440"/>
<dbReference type="eggNOG" id="KOG3993">
    <property type="taxonomic scope" value="Eukaryota"/>
</dbReference>
<dbReference type="GeneTree" id="ENSGT00940000162391"/>
<dbReference type="HOGENOM" id="CLU_033476_1_0_1"/>
<dbReference type="InParanoid" id="Q9JMC2"/>
<dbReference type="OMA" id="CPATFFS"/>
<dbReference type="OrthoDB" id="8953942at2759"/>
<dbReference type="PhylomeDB" id="Q9JMC2"/>
<dbReference type="TreeFam" id="TF320538"/>
<dbReference type="BioGRID-ORCS" id="56856">
    <property type="hits" value="1 hit in 77 CRISPR screens"/>
</dbReference>
<dbReference type="PRO" id="PR:Q9JMC2"/>
<dbReference type="Proteomes" id="UP000000589">
    <property type="component" value="Chromosome 12"/>
</dbReference>
<dbReference type="RNAct" id="Q9JMC2">
    <property type="molecule type" value="protein"/>
</dbReference>
<dbReference type="Bgee" id="ENSMUSG00000045440">
    <property type="expression patterns" value="Expressed in lumbar dorsal root ganglion and 34 other cell types or tissues"/>
</dbReference>
<dbReference type="GO" id="GO:0005737">
    <property type="term" value="C:cytoplasm"/>
    <property type="evidence" value="ECO:0007669"/>
    <property type="project" value="UniProtKB-SubCell"/>
</dbReference>
<dbReference type="GO" id="GO:0005634">
    <property type="term" value="C:nucleus"/>
    <property type="evidence" value="ECO:0000250"/>
    <property type="project" value="MGI"/>
</dbReference>
<dbReference type="GO" id="GO:0003677">
    <property type="term" value="F:DNA binding"/>
    <property type="evidence" value="ECO:0007669"/>
    <property type="project" value="UniProtKB-KW"/>
</dbReference>
<dbReference type="GO" id="GO:0003700">
    <property type="term" value="F:DNA-binding transcription factor activity"/>
    <property type="evidence" value="ECO:0007669"/>
    <property type="project" value="InterPro"/>
</dbReference>
<dbReference type="GO" id="GO:0003714">
    <property type="term" value="F:transcription corepressor activity"/>
    <property type="evidence" value="ECO:0000250"/>
    <property type="project" value="MGI"/>
</dbReference>
<dbReference type="GO" id="GO:0008270">
    <property type="term" value="F:zinc ion binding"/>
    <property type="evidence" value="ECO:0007669"/>
    <property type="project" value="UniProtKB-KW"/>
</dbReference>
<dbReference type="GO" id="GO:0030154">
    <property type="term" value="P:cell differentiation"/>
    <property type="evidence" value="ECO:0007669"/>
    <property type="project" value="UniProtKB-ARBA"/>
</dbReference>
<dbReference type="GO" id="GO:0045892">
    <property type="term" value="P:negative regulation of DNA-templated transcription"/>
    <property type="evidence" value="ECO:0000250"/>
    <property type="project" value="MGI"/>
</dbReference>
<dbReference type="FunFam" id="3.30.160.60:FF:000488">
    <property type="entry name" value="Insulinoma-associated protein 2"/>
    <property type="match status" value="1"/>
</dbReference>
<dbReference type="FunFam" id="3.30.160.60:FF:001411">
    <property type="entry name" value="insulinoma-associated protein 2"/>
    <property type="match status" value="1"/>
</dbReference>
<dbReference type="Gene3D" id="3.30.160.60">
    <property type="entry name" value="Classic Zinc Finger"/>
    <property type="match status" value="3"/>
</dbReference>
<dbReference type="InterPro" id="IPR042972">
    <property type="entry name" value="INSM1/2"/>
</dbReference>
<dbReference type="InterPro" id="IPR036236">
    <property type="entry name" value="Znf_C2H2_sf"/>
</dbReference>
<dbReference type="InterPro" id="IPR013087">
    <property type="entry name" value="Znf_C2H2_type"/>
</dbReference>
<dbReference type="PANTHER" id="PTHR15065">
    <property type="entry name" value="INSULINOMA-ASSOCIATED 1"/>
    <property type="match status" value="1"/>
</dbReference>
<dbReference type="PANTHER" id="PTHR15065:SF6">
    <property type="entry name" value="INSULINOMA-ASSOCIATED PROTEIN 2"/>
    <property type="match status" value="1"/>
</dbReference>
<dbReference type="Pfam" id="PF00096">
    <property type="entry name" value="zf-C2H2"/>
    <property type="match status" value="2"/>
</dbReference>
<dbReference type="SMART" id="SM00355">
    <property type="entry name" value="ZnF_C2H2"/>
    <property type="match status" value="5"/>
</dbReference>
<dbReference type="SUPFAM" id="SSF57667">
    <property type="entry name" value="beta-beta-alpha zinc fingers"/>
    <property type="match status" value="2"/>
</dbReference>
<dbReference type="PROSITE" id="PS00028">
    <property type="entry name" value="ZINC_FINGER_C2H2_1"/>
    <property type="match status" value="4"/>
</dbReference>
<dbReference type="PROSITE" id="PS50157">
    <property type="entry name" value="ZINC_FINGER_C2H2_2"/>
    <property type="match status" value="3"/>
</dbReference>
<protein>
    <recommendedName>
        <fullName>Insulinoma-associated protein 2</fullName>
    </recommendedName>
    <alternativeName>
        <fullName>Methylated in liver tumor 1</fullName>
    </alternativeName>
</protein>
<reference key="1">
    <citation type="journal article" date="2001" name="Cancer Res.">
        <title>Identification of a novel member of the snail/Gfi-1 repressor family, mlt 1, which is methylated and silenced in liver tumors of SV40 T antigen transgenic mice.</title>
        <authorList>
            <person name="Tateno M."/>
            <person name="Fukunishi Y."/>
            <person name="Komatsu S."/>
            <person name="Okazaki Y."/>
            <person name="Kawai J."/>
            <person name="Shibata K."/>
            <person name="Itoh M."/>
            <person name="Muramatsu M."/>
            <person name="Held W.A."/>
            <person name="Hayashizaki Y."/>
        </authorList>
    </citation>
    <scope>NUCLEOTIDE SEQUENCE [GENOMIC DNA]</scope>
    <scope>FUNCTION</scope>
    <scope>TISSUE SPECIFICITY</scope>
    <source>
        <strain>C57BL/6J</strain>
        <tissue>Brain</tissue>
        <tissue>Kidney</tissue>
    </source>
</reference>
<reference key="2">
    <citation type="journal article" date="2009" name="PLoS Biol.">
        <title>Lineage-specific biology revealed by a finished genome assembly of the mouse.</title>
        <authorList>
            <person name="Church D.M."/>
            <person name="Goodstadt L."/>
            <person name="Hillier L.W."/>
            <person name="Zody M.C."/>
            <person name="Goldstein S."/>
            <person name="She X."/>
            <person name="Bult C.J."/>
            <person name="Agarwala R."/>
            <person name="Cherry J.L."/>
            <person name="DiCuccio M."/>
            <person name="Hlavina W."/>
            <person name="Kapustin Y."/>
            <person name="Meric P."/>
            <person name="Maglott D."/>
            <person name="Birtle Z."/>
            <person name="Marques A.C."/>
            <person name="Graves T."/>
            <person name="Zhou S."/>
            <person name="Teague B."/>
            <person name="Potamousis K."/>
            <person name="Churas C."/>
            <person name="Place M."/>
            <person name="Herschleb J."/>
            <person name="Runnheim R."/>
            <person name="Forrest D."/>
            <person name="Amos-Landgraf J."/>
            <person name="Schwartz D.C."/>
            <person name="Cheng Z."/>
            <person name="Lindblad-Toh K."/>
            <person name="Eichler E.E."/>
            <person name="Ponting C.P."/>
        </authorList>
    </citation>
    <scope>NUCLEOTIDE SEQUENCE [LARGE SCALE GENOMIC DNA]</scope>
    <source>
        <strain>C57BL/6J</strain>
    </source>
</reference>
<reference key="3">
    <citation type="journal article" date="2011" name="Endocrinology">
        <title>Expression of insulinoma-associated 2 (INSM2) in pancreatic islet cells is regulated by the transcription factors Ngn3 and NeuroD1.</title>
        <authorList>
            <person name="Cai T."/>
            <person name="Chen X."/>
            <person name="Wang R."/>
            <person name="Xu H."/>
            <person name="You Y."/>
            <person name="Zhang T."/>
            <person name="Lan M.S."/>
            <person name="Notkins A.L."/>
        </authorList>
    </citation>
    <scope>SUBCELLULAR LOCATION</scope>
    <scope>TISSUE SPECIFICITY</scope>
    <scope>DEVELOPMENTAL STAGE</scope>
    <scope>INDUCTION</scope>
</reference>
<name>INSM2_MOUSE</name>
<proteinExistence type="evidence at protein level"/>
<gene>
    <name type="primary">Insm2</name>
    <name type="synonym">Mlt1</name>
</gene>
<sequence>MPRGFLVKRTKRSGSSYRARPVEPLFPPPGPLAAQSSPEEPGRGLLGSPCLAPPQDDAEWGAGGGDGPGPSPARPAGPELRRAFLERCLRSPVSAESFPSATAFCSAAPAAVTSGEELVPPQVPVSVPIPVPGPAPHGLQRRGKGAPVCASAPAAVRKPKAVRRLSFADEVTTSPVLGLKIKEEEPGAPARALGGVRTPLGEFICQLCKHQYADPFALAQHRCSRIVRVEYRCPECDKVFSCPANLASHRRWHKPRPTPACAASKPPHAPLTPPDPSLATGKENGRVPRTDDQHPQAPDSSGDGQHRDSAARPGLQALVYPEAARPQAPYPEVILGRHGPGSSGASAGATSEVFVCPYCHKKFRRQAYLRKHLGTHETGSARAPTPGFGSERTAPLTFACPLCGAHFPSADIREKHRLWHAVREELLLPALVGAPSEAGPGGASDGSAQQIFSCKYCPSTFFSSPGLTRHINKCHPSESRQVLLLQMPLRPGC</sequence>
<feature type="chain" id="PRO_0000331577" description="Insulinoma-associated protein 2">
    <location>
        <begin position="1"/>
        <end position="493"/>
    </location>
</feature>
<feature type="zinc finger region" description="C2H2-type 1; atypical" evidence="2">
    <location>
        <begin position="203"/>
        <end position="223"/>
    </location>
</feature>
<feature type="zinc finger region" description="C2H2-type 2" evidence="2">
    <location>
        <begin position="231"/>
        <end position="253"/>
    </location>
</feature>
<feature type="zinc finger region" description="C2H2-type 3" evidence="2">
    <location>
        <begin position="354"/>
        <end position="376"/>
    </location>
</feature>
<feature type="zinc finger region" description="C2H2-type 4" evidence="2">
    <location>
        <begin position="398"/>
        <end position="420"/>
    </location>
</feature>
<feature type="zinc finger region" description="C2H2-type 5" evidence="2">
    <location>
        <begin position="452"/>
        <end position="475"/>
    </location>
</feature>
<feature type="region of interest" description="Disordered" evidence="3">
    <location>
        <begin position="1"/>
        <end position="77"/>
    </location>
</feature>
<feature type="region of interest" description="SNAG domain" evidence="1">
    <location>
        <begin position="1"/>
        <end position="20"/>
    </location>
</feature>
<feature type="region of interest" description="Disordered" evidence="3">
    <location>
        <begin position="248"/>
        <end position="310"/>
    </location>
</feature>
<feature type="compositionally biased region" description="Basic residues" evidence="3">
    <location>
        <begin position="1"/>
        <end position="12"/>
    </location>
</feature>
<feature type="compositionally biased region" description="Pro residues" evidence="3">
    <location>
        <begin position="267"/>
        <end position="276"/>
    </location>
</feature>
<feature type="compositionally biased region" description="Basic and acidic residues" evidence="3">
    <location>
        <begin position="283"/>
        <end position="294"/>
    </location>
</feature>
<feature type="sequence conflict" description="In Ref. 1; BAA92776." evidence="6" ref="1">
    <original>R</original>
    <variation>K</variation>
    <location>
        <position position="74"/>
    </location>
</feature>
<feature type="sequence conflict" description="In Ref. 1; BAA92776." evidence="6" ref="1">
    <original>V</original>
    <variation>I</variation>
    <location>
        <position position="148"/>
    </location>
</feature>
<evidence type="ECO:0000250" key="1"/>
<evidence type="ECO:0000255" key="2">
    <source>
        <dbReference type="PROSITE-ProRule" id="PRU00042"/>
    </source>
</evidence>
<evidence type="ECO:0000256" key="3">
    <source>
        <dbReference type="SAM" id="MobiDB-lite"/>
    </source>
</evidence>
<evidence type="ECO:0000269" key="4">
    <source>
    </source>
</evidence>
<evidence type="ECO:0000269" key="5">
    <source>
    </source>
</evidence>
<evidence type="ECO:0000305" key="6"/>
<organism>
    <name type="scientific">Mus musculus</name>
    <name type="common">Mouse</name>
    <dbReference type="NCBI Taxonomy" id="10090"/>
    <lineage>
        <taxon>Eukaryota</taxon>
        <taxon>Metazoa</taxon>
        <taxon>Chordata</taxon>
        <taxon>Craniata</taxon>
        <taxon>Vertebrata</taxon>
        <taxon>Euteleostomi</taxon>
        <taxon>Mammalia</taxon>
        <taxon>Eutheria</taxon>
        <taxon>Euarchontoglires</taxon>
        <taxon>Glires</taxon>
        <taxon>Rodentia</taxon>
        <taxon>Myomorpha</taxon>
        <taxon>Muroidea</taxon>
        <taxon>Muridae</taxon>
        <taxon>Murinae</taxon>
        <taxon>Mus</taxon>
        <taxon>Mus</taxon>
    </lineage>
</organism>
<accession>Q9JMC2</accession>
<accession>E9QNA9</accession>
<keyword id="KW-0963">Cytoplasm</keyword>
<keyword id="KW-0238">DNA-binding</keyword>
<keyword id="KW-0479">Metal-binding</keyword>
<keyword id="KW-0539">Nucleus</keyword>
<keyword id="KW-1185">Reference proteome</keyword>
<keyword id="KW-0677">Repeat</keyword>
<keyword id="KW-0804">Transcription</keyword>
<keyword id="KW-0805">Transcription regulation</keyword>
<keyword id="KW-0862">Zinc</keyword>
<keyword id="KW-0863">Zinc-finger</keyword>
<comment type="function">
    <text evidence="4">May function as a growth suppressor or tumor suppressor in liver cells and in certain neurons.</text>
</comment>
<comment type="subcellular location">
    <subcellularLocation>
        <location evidence="5">Cytoplasm</location>
    </subcellularLocation>
    <subcellularLocation>
        <location evidence="5">Nucleus</location>
    </subcellularLocation>
</comment>
<comment type="tissue specificity">
    <text evidence="4 5">Expressed in spleen, stomach, liver, kidney and testis. In the pancreas, expressed in islet cells, including insulin-producing beta-cells, but not in acinar cells (at protein level). In the brain, expressed in the neuronal cells of the cerebral cortex, the Purkinje cells of the cerebellum and the hippocampal region including CA1 and CA3 (at protein level).</text>
</comment>
<comment type="developmental stage">
    <text evidence="5">Expressed in 6.5 to 18.5 dpc embryos and transiently up-regulated from 11.5 to 13.5 dpc. In the developing brain, up-regulated 2 weeks postnatally, with gradual decrease thereafter. Still detectable at 52 weeks.</text>
</comment>
<comment type="induction">
    <text evidence="5">Up-regulated by NEUROG3 and NEUROD1.</text>
</comment>